<gene>
    <name type="primary">yajC</name>
    <name type="ordered locus">CT_741</name>
</gene>
<keyword id="KW-0997">Cell inner membrane</keyword>
<keyword id="KW-1003">Cell membrane</keyword>
<keyword id="KW-0472">Membrane</keyword>
<keyword id="KW-0653">Protein transport</keyword>
<keyword id="KW-1185">Reference proteome</keyword>
<keyword id="KW-0811">Translocation</keyword>
<keyword id="KW-0812">Transmembrane</keyword>
<keyword id="KW-1133">Transmembrane helix</keyword>
<keyword id="KW-0813">Transport</keyword>
<sequence length="114" mass="12784">MYSRLFFSILFFLGCCPALFADTDSPQRATFGQPAVMLGIAIVFFYFILWRPEQKRRQAMEKRKSELAVGDKVTAMGIVGTIAEIREHTVILNIASGKIEILKAAISEILKAEK</sequence>
<organism>
    <name type="scientific">Chlamydia trachomatis serovar D (strain ATCC VR-885 / DSM 19411 / UW-3/Cx)</name>
    <dbReference type="NCBI Taxonomy" id="272561"/>
    <lineage>
        <taxon>Bacteria</taxon>
        <taxon>Pseudomonadati</taxon>
        <taxon>Chlamydiota</taxon>
        <taxon>Chlamydiia</taxon>
        <taxon>Chlamydiales</taxon>
        <taxon>Chlamydiaceae</taxon>
        <taxon>Chlamydia/Chlamydophila group</taxon>
        <taxon>Chlamydia</taxon>
    </lineage>
</organism>
<name>YAJC_CHLTR</name>
<protein>
    <recommendedName>
        <fullName>Sec translocon accessory complex subunit YajC</fullName>
    </recommendedName>
</protein>
<evidence type="ECO:0000250" key="1">
    <source>
        <dbReference type="UniProtKB" id="P0ADZ7"/>
    </source>
</evidence>
<evidence type="ECO:0000255" key="2"/>
<evidence type="ECO:0000305" key="3"/>
<feature type="chain" id="PRO_0000097031" description="Sec translocon accessory complex subunit YajC">
    <location>
        <begin position="1"/>
        <end position="114"/>
    </location>
</feature>
<feature type="transmembrane region" description="Helical" evidence="2">
    <location>
        <begin position="30"/>
        <end position="50"/>
    </location>
</feature>
<proteinExistence type="inferred from homology"/>
<accession>O84746</accession>
<reference key="1">
    <citation type="journal article" date="1998" name="Science">
        <title>Genome sequence of an obligate intracellular pathogen of humans: Chlamydia trachomatis.</title>
        <authorList>
            <person name="Stephens R.S."/>
            <person name="Kalman S."/>
            <person name="Lammel C.J."/>
            <person name="Fan J."/>
            <person name="Marathe R."/>
            <person name="Aravind L."/>
            <person name="Mitchell W.P."/>
            <person name="Olinger L."/>
            <person name="Tatusov R.L."/>
            <person name="Zhao Q."/>
            <person name="Koonin E.V."/>
            <person name="Davis R.W."/>
        </authorList>
    </citation>
    <scope>NUCLEOTIDE SEQUENCE [LARGE SCALE GENOMIC DNA]</scope>
    <source>
        <strain>ATCC VR-885 / DSM 19411 / UW-3/Cx</strain>
    </source>
</reference>
<dbReference type="EMBL" id="AE001273">
    <property type="protein sequence ID" value="AAC68336.1"/>
    <property type="molecule type" value="Genomic_DNA"/>
</dbReference>
<dbReference type="PIR" id="G71476">
    <property type="entry name" value="G71476"/>
</dbReference>
<dbReference type="RefSeq" id="NP_220260.1">
    <property type="nucleotide sequence ID" value="NC_000117.1"/>
</dbReference>
<dbReference type="RefSeq" id="WP_009872119.1">
    <property type="nucleotide sequence ID" value="NC_000117.1"/>
</dbReference>
<dbReference type="SMR" id="O84746"/>
<dbReference type="FunCoup" id="O84746">
    <property type="interactions" value="132"/>
</dbReference>
<dbReference type="STRING" id="272561.CT_741"/>
<dbReference type="EnsemblBacteria" id="AAC68336">
    <property type="protein sequence ID" value="AAC68336"/>
    <property type="gene ID" value="CT_741"/>
</dbReference>
<dbReference type="GeneID" id="884535"/>
<dbReference type="KEGG" id="ctr:CT_741"/>
<dbReference type="PATRIC" id="fig|272561.5.peg.815"/>
<dbReference type="HOGENOM" id="CLU_116157_2_2_0"/>
<dbReference type="InParanoid" id="O84746"/>
<dbReference type="OrthoDB" id="9800132at2"/>
<dbReference type="Proteomes" id="UP000000431">
    <property type="component" value="Chromosome"/>
</dbReference>
<dbReference type="GO" id="GO:0005886">
    <property type="term" value="C:plasma membrane"/>
    <property type="evidence" value="ECO:0000318"/>
    <property type="project" value="GO_Central"/>
</dbReference>
<dbReference type="GO" id="GO:0015031">
    <property type="term" value="P:protein transport"/>
    <property type="evidence" value="ECO:0007669"/>
    <property type="project" value="UniProtKB-KW"/>
</dbReference>
<dbReference type="InterPro" id="IPR003849">
    <property type="entry name" value="Preprotein_translocase_YajC"/>
</dbReference>
<dbReference type="NCBIfam" id="TIGR00739">
    <property type="entry name" value="yajC"/>
    <property type="match status" value="1"/>
</dbReference>
<dbReference type="PANTHER" id="PTHR33909">
    <property type="entry name" value="SEC TRANSLOCON ACCESSORY COMPLEX SUBUNIT YAJC"/>
    <property type="match status" value="1"/>
</dbReference>
<dbReference type="PANTHER" id="PTHR33909:SF1">
    <property type="entry name" value="SEC TRANSLOCON ACCESSORY COMPLEX SUBUNIT YAJC"/>
    <property type="match status" value="1"/>
</dbReference>
<dbReference type="Pfam" id="PF02699">
    <property type="entry name" value="YajC"/>
    <property type="match status" value="1"/>
</dbReference>
<dbReference type="PRINTS" id="PR01853">
    <property type="entry name" value="YAJCTRNLCASE"/>
</dbReference>
<dbReference type="SMART" id="SM01323">
    <property type="entry name" value="YajC"/>
    <property type="match status" value="1"/>
</dbReference>
<dbReference type="PROSITE" id="PS51257">
    <property type="entry name" value="PROKAR_LIPOPROTEIN"/>
    <property type="match status" value="1"/>
</dbReference>
<comment type="function">
    <text evidence="1">The SecYEG-SecDF-YajC-YidC holo-translocon (HTL) protein secretase/insertase is a supercomplex required for protein secretion, insertion of proteins into membranes, and assembly of membrane protein complexes. While the SecYEG complex is essential for assembly of a number of proteins and complexes, the SecDF-YajC-YidC subcomplex facilitates these functions.</text>
</comment>
<comment type="subunit">
    <text evidence="1">Part of the SecDF-YidC-YajC translocase complex. The SecDF-YidC-YajC translocase forms a supercomplex with SecYEG, called the holo-translocon (HTL).</text>
</comment>
<comment type="subcellular location">
    <subcellularLocation>
        <location evidence="1">Cell inner membrane</location>
        <topology evidence="1">Single-pass membrane protein</topology>
    </subcellularLocation>
</comment>
<comment type="similarity">
    <text evidence="3">Belongs to the YajC family.</text>
</comment>